<dbReference type="EC" id="2.7.4.22" evidence="1"/>
<dbReference type="EMBL" id="AM236080">
    <property type="protein sequence ID" value="CAK07715.1"/>
    <property type="molecule type" value="Genomic_DNA"/>
</dbReference>
<dbReference type="RefSeq" id="WP_003539289.1">
    <property type="nucleotide sequence ID" value="NC_008380.1"/>
</dbReference>
<dbReference type="SMR" id="Q1MH52"/>
<dbReference type="EnsemblBacteria" id="CAK07715">
    <property type="protein sequence ID" value="CAK07715"/>
    <property type="gene ID" value="RL2223"/>
</dbReference>
<dbReference type="GeneID" id="84669782"/>
<dbReference type="KEGG" id="rle:RL2223"/>
<dbReference type="eggNOG" id="COG0528">
    <property type="taxonomic scope" value="Bacteria"/>
</dbReference>
<dbReference type="HOGENOM" id="CLU_033861_0_0_5"/>
<dbReference type="UniPathway" id="UPA00159">
    <property type="reaction ID" value="UER00275"/>
</dbReference>
<dbReference type="Proteomes" id="UP000006575">
    <property type="component" value="Chromosome"/>
</dbReference>
<dbReference type="GO" id="GO:0005829">
    <property type="term" value="C:cytosol"/>
    <property type="evidence" value="ECO:0007669"/>
    <property type="project" value="TreeGrafter"/>
</dbReference>
<dbReference type="GO" id="GO:0005524">
    <property type="term" value="F:ATP binding"/>
    <property type="evidence" value="ECO:0007669"/>
    <property type="project" value="UniProtKB-KW"/>
</dbReference>
<dbReference type="GO" id="GO:0033862">
    <property type="term" value="F:UMP kinase activity"/>
    <property type="evidence" value="ECO:0007669"/>
    <property type="project" value="UniProtKB-EC"/>
</dbReference>
<dbReference type="GO" id="GO:0044210">
    <property type="term" value="P:'de novo' CTP biosynthetic process"/>
    <property type="evidence" value="ECO:0007669"/>
    <property type="project" value="UniProtKB-UniRule"/>
</dbReference>
<dbReference type="GO" id="GO:0006225">
    <property type="term" value="P:UDP biosynthetic process"/>
    <property type="evidence" value="ECO:0007669"/>
    <property type="project" value="TreeGrafter"/>
</dbReference>
<dbReference type="CDD" id="cd04254">
    <property type="entry name" value="AAK_UMPK-PyrH-Ec"/>
    <property type="match status" value="1"/>
</dbReference>
<dbReference type="FunFam" id="3.40.1160.10:FF:000001">
    <property type="entry name" value="Uridylate kinase"/>
    <property type="match status" value="1"/>
</dbReference>
<dbReference type="Gene3D" id="3.40.1160.10">
    <property type="entry name" value="Acetylglutamate kinase-like"/>
    <property type="match status" value="1"/>
</dbReference>
<dbReference type="HAMAP" id="MF_01220_B">
    <property type="entry name" value="PyrH_B"/>
    <property type="match status" value="1"/>
</dbReference>
<dbReference type="InterPro" id="IPR036393">
    <property type="entry name" value="AceGlu_kinase-like_sf"/>
</dbReference>
<dbReference type="InterPro" id="IPR001048">
    <property type="entry name" value="Asp/Glu/Uridylate_kinase"/>
</dbReference>
<dbReference type="InterPro" id="IPR011817">
    <property type="entry name" value="Uridylate_kinase"/>
</dbReference>
<dbReference type="InterPro" id="IPR015963">
    <property type="entry name" value="Uridylate_kinase_bac"/>
</dbReference>
<dbReference type="NCBIfam" id="TIGR02075">
    <property type="entry name" value="pyrH_bact"/>
    <property type="match status" value="1"/>
</dbReference>
<dbReference type="PANTHER" id="PTHR42833">
    <property type="entry name" value="URIDYLATE KINASE"/>
    <property type="match status" value="1"/>
</dbReference>
<dbReference type="PANTHER" id="PTHR42833:SF4">
    <property type="entry name" value="URIDYLATE KINASE PUMPKIN, CHLOROPLASTIC"/>
    <property type="match status" value="1"/>
</dbReference>
<dbReference type="Pfam" id="PF00696">
    <property type="entry name" value="AA_kinase"/>
    <property type="match status" value="1"/>
</dbReference>
<dbReference type="PIRSF" id="PIRSF005650">
    <property type="entry name" value="Uridylate_kin"/>
    <property type="match status" value="1"/>
</dbReference>
<dbReference type="SUPFAM" id="SSF53633">
    <property type="entry name" value="Carbamate kinase-like"/>
    <property type="match status" value="1"/>
</dbReference>
<proteinExistence type="inferred from homology"/>
<accession>Q1MH52</accession>
<reference key="1">
    <citation type="journal article" date="2006" name="Genome Biol.">
        <title>The genome of Rhizobium leguminosarum has recognizable core and accessory components.</title>
        <authorList>
            <person name="Young J.P.W."/>
            <person name="Crossman L.C."/>
            <person name="Johnston A.W.B."/>
            <person name="Thomson N.R."/>
            <person name="Ghazoui Z.F."/>
            <person name="Hull K.H."/>
            <person name="Wexler M."/>
            <person name="Curson A.R.J."/>
            <person name="Todd J.D."/>
            <person name="Poole P.S."/>
            <person name="Mauchline T.H."/>
            <person name="East A.K."/>
            <person name="Quail M.A."/>
            <person name="Churcher C."/>
            <person name="Arrowsmith C."/>
            <person name="Cherevach I."/>
            <person name="Chillingworth T."/>
            <person name="Clarke K."/>
            <person name="Cronin A."/>
            <person name="Davis P."/>
            <person name="Fraser A."/>
            <person name="Hance Z."/>
            <person name="Hauser H."/>
            <person name="Jagels K."/>
            <person name="Moule S."/>
            <person name="Mungall K."/>
            <person name="Norbertczak H."/>
            <person name="Rabbinowitsch E."/>
            <person name="Sanders M."/>
            <person name="Simmonds M."/>
            <person name="Whitehead S."/>
            <person name="Parkhill J."/>
        </authorList>
    </citation>
    <scope>NUCLEOTIDE SEQUENCE [LARGE SCALE GENOMIC DNA]</scope>
    <source>
        <strain>DSM 114642 / LMG 32736 / 3841</strain>
    </source>
</reference>
<feature type="chain" id="PRO_1000053996" description="Uridylate kinase">
    <location>
        <begin position="1"/>
        <end position="240"/>
    </location>
</feature>
<feature type="region of interest" description="Involved in allosteric activation by GTP" evidence="1">
    <location>
        <begin position="21"/>
        <end position="26"/>
    </location>
</feature>
<feature type="binding site" evidence="1">
    <location>
        <begin position="13"/>
        <end position="16"/>
    </location>
    <ligand>
        <name>ATP</name>
        <dbReference type="ChEBI" id="CHEBI:30616"/>
    </ligand>
</feature>
<feature type="binding site" evidence="1">
    <location>
        <position position="55"/>
    </location>
    <ligand>
        <name>UMP</name>
        <dbReference type="ChEBI" id="CHEBI:57865"/>
    </ligand>
</feature>
<feature type="binding site" evidence="1">
    <location>
        <position position="56"/>
    </location>
    <ligand>
        <name>ATP</name>
        <dbReference type="ChEBI" id="CHEBI:30616"/>
    </ligand>
</feature>
<feature type="binding site" evidence="1">
    <location>
        <position position="60"/>
    </location>
    <ligand>
        <name>ATP</name>
        <dbReference type="ChEBI" id="CHEBI:30616"/>
    </ligand>
</feature>
<feature type="binding site" evidence="1">
    <location>
        <position position="75"/>
    </location>
    <ligand>
        <name>UMP</name>
        <dbReference type="ChEBI" id="CHEBI:57865"/>
    </ligand>
</feature>
<feature type="binding site" evidence="1">
    <location>
        <begin position="136"/>
        <end position="143"/>
    </location>
    <ligand>
        <name>UMP</name>
        <dbReference type="ChEBI" id="CHEBI:57865"/>
    </ligand>
</feature>
<feature type="binding site" evidence="1">
    <location>
        <position position="163"/>
    </location>
    <ligand>
        <name>ATP</name>
        <dbReference type="ChEBI" id="CHEBI:30616"/>
    </ligand>
</feature>
<feature type="binding site" evidence="1">
    <location>
        <position position="164"/>
    </location>
    <ligand>
        <name>ATP</name>
        <dbReference type="ChEBI" id="CHEBI:30616"/>
    </ligand>
</feature>
<feature type="binding site" evidence="1">
    <location>
        <position position="169"/>
    </location>
    <ligand>
        <name>ATP</name>
        <dbReference type="ChEBI" id="CHEBI:30616"/>
    </ligand>
</feature>
<feature type="binding site" evidence="1">
    <location>
        <position position="172"/>
    </location>
    <ligand>
        <name>ATP</name>
        <dbReference type="ChEBI" id="CHEBI:30616"/>
    </ligand>
</feature>
<protein>
    <recommendedName>
        <fullName evidence="1">Uridylate kinase</fullName>
        <shortName evidence="1">UK</shortName>
        <ecNumber evidence="1">2.7.4.22</ecNumber>
    </recommendedName>
    <alternativeName>
        <fullName evidence="1">Uridine monophosphate kinase</fullName>
        <shortName evidence="1">UMP kinase</shortName>
        <shortName evidence="1">UMPK</shortName>
    </alternativeName>
</protein>
<evidence type="ECO:0000255" key="1">
    <source>
        <dbReference type="HAMAP-Rule" id="MF_01220"/>
    </source>
</evidence>
<organism>
    <name type="scientific">Rhizobium johnstonii (strain DSM 114642 / LMG 32736 / 3841)</name>
    <name type="common">Rhizobium leguminosarum bv. viciae</name>
    <dbReference type="NCBI Taxonomy" id="216596"/>
    <lineage>
        <taxon>Bacteria</taxon>
        <taxon>Pseudomonadati</taxon>
        <taxon>Pseudomonadota</taxon>
        <taxon>Alphaproteobacteria</taxon>
        <taxon>Hyphomicrobiales</taxon>
        <taxon>Rhizobiaceae</taxon>
        <taxon>Rhizobium/Agrobacterium group</taxon>
        <taxon>Rhizobium</taxon>
        <taxon>Rhizobium johnstonii</taxon>
    </lineage>
</organism>
<name>PYRH_RHIJ3</name>
<keyword id="KW-0021">Allosteric enzyme</keyword>
<keyword id="KW-0067">ATP-binding</keyword>
<keyword id="KW-0963">Cytoplasm</keyword>
<keyword id="KW-0418">Kinase</keyword>
<keyword id="KW-0547">Nucleotide-binding</keyword>
<keyword id="KW-0665">Pyrimidine biosynthesis</keyword>
<keyword id="KW-0808">Transferase</keyword>
<sequence>MSLEPVYKRVLLKASGEALMGGQGFGIDVTVADRIASDIAEARHMGVEVGVVVGGGNIFRGVAVASKGGDRVTGDHMGMLGTIINALALATSLRKLNIDTVVLSAISMPEICESFSQRATLYHLSMGRVVIFAGGTGNPFFTTDSAAALRAAEMGAEAIFKGTQVDGIYTADPKKYPDATRLDRLTHQEVLDRGLAVMDVAAVALARENSIPIIVFSIHEKGGFAEILTGGGLKTIVSDN</sequence>
<comment type="function">
    <text evidence="1">Catalyzes the reversible phosphorylation of UMP to UDP.</text>
</comment>
<comment type="catalytic activity">
    <reaction evidence="1">
        <text>UMP + ATP = UDP + ADP</text>
        <dbReference type="Rhea" id="RHEA:24400"/>
        <dbReference type="ChEBI" id="CHEBI:30616"/>
        <dbReference type="ChEBI" id="CHEBI:57865"/>
        <dbReference type="ChEBI" id="CHEBI:58223"/>
        <dbReference type="ChEBI" id="CHEBI:456216"/>
        <dbReference type="EC" id="2.7.4.22"/>
    </reaction>
</comment>
<comment type="activity regulation">
    <text evidence="1">Allosterically activated by GTP. Inhibited by UTP.</text>
</comment>
<comment type="pathway">
    <text evidence="1">Pyrimidine metabolism; CTP biosynthesis via de novo pathway; UDP from UMP (UMPK route): step 1/1.</text>
</comment>
<comment type="subunit">
    <text evidence="1">Homohexamer.</text>
</comment>
<comment type="subcellular location">
    <subcellularLocation>
        <location evidence="1">Cytoplasm</location>
    </subcellularLocation>
</comment>
<comment type="similarity">
    <text evidence="1">Belongs to the UMP kinase family.</text>
</comment>
<gene>
    <name evidence="1" type="primary">pyrH</name>
    <name type="ordered locus">RL2223</name>
</gene>